<accession>Q9QB84</accession>
<evidence type="ECO:0000250" key="1"/>
<evidence type="ECO:0000305" key="2"/>
<organism>
    <name type="scientific">Yaba monkey tumor virus (strain VR587)</name>
    <name type="common">YMTV</name>
    <dbReference type="NCBI Taxonomy" id="928314"/>
    <lineage>
        <taxon>Viruses</taxon>
        <taxon>Varidnaviria</taxon>
        <taxon>Bamfordvirae</taxon>
        <taxon>Nucleocytoviricota</taxon>
        <taxon>Pokkesviricetes</taxon>
        <taxon>Chitovirales</taxon>
        <taxon>Poxviridae</taxon>
        <taxon>Chordopoxvirinae</taxon>
        <taxon>Yatapoxvirus</taxon>
        <taxon>Yaba monkey tumor virus</taxon>
    </lineage>
</organism>
<name>ETF2_YMTV5</name>
<dbReference type="EMBL" id="AY386371">
    <property type="protein sequence ID" value="AAR07454.1"/>
    <property type="molecule type" value="Genomic_DNA"/>
</dbReference>
<dbReference type="RefSeq" id="NP_938353.1">
    <property type="nucleotide sequence ID" value="NC_005179.1"/>
</dbReference>
<dbReference type="SMR" id="Q9QB84"/>
<dbReference type="KEGG" id="vg:2943659"/>
<dbReference type="Proteomes" id="UP000008596">
    <property type="component" value="Segment"/>
</dbReference>
<dbReference type="GO" id="GO:0003677">
    <property type="term" value="F:DNA binding"/>
    <property type="evidence" value="ECO:0007669"/>
    <property type="project" value="UniProtKB-KW"/>
</dbReference>
<dbReference type="GO" id="GO:0045893">
    <property type="term" value="P:positive regulation of DNA-templated transcription"/>
    <property type="evidence" value="ECO:0007669"/>
    <property type="project" value="InterPro"/>
</dbReference>
<dbReference type="InterPro" id="IPR007532">
    <property type="entry name" value="Poxvirus_early-TF_lsu"/>
</dbReference>
<dbReference type="Pfam" id="PF04441">
    <property type="entry name" value="Pox_VERT_large"/>
    <property type="match status" value="1"/>
</dbReference>
<proteinExistence type="inferred from homology"/>
<feature type="chain" id="PRO_0000099089" description="Early transcription factor 82 kDa subunit">
    <location>
        <begin position="1"/>
        <end position="713"/>
    </location>
</feature>
<keyword id="KW-0010">Activator</keyword>
<keyword id="KW-0238">DNA-binding</keyword>
<keyword id="KW-1185">Reference proteome</keyword>
<keyword id="KW-0804">Transcription</keyword>
<keyword id="KW-0805">Transcription regulation</keyword>
<gene>
    <name type="primary">VETFL</name>
    <name type="ordered locus">98L</name>
    <name type="ORF">B14L</name>
</gene>
<sequence length="713" mass="82222">MKYTISPQLVIYVGKGQEIKRALYLTPYGILDDKSSIYYFLKTHLNIHNPEIHKRHILLTLKIRQVKGYLSNLLNINDDIIIYSHKNNLEFSYVDNTIFNPFTNTQRKTLIRSDGFLYNIYPGACDFLVIWVTNSKDTPMLEFGSYEEVDSNILKFENHLLDVFNSLDLEMNIESKFNNIFRTNLKSTGLMTIIKKINESDTSYKSLLYKSDEYFINMTGNHFILTDEKLNLSVWDSDSCLAFSSDGDTIVINNVKLFTELVSDINAQMERIKGDVTYKVFLSTPITSRIKLDIETSFVFVETATNNILLSADKKISIILAKNHISIKVKNYIPNIEKYFTFLVVAINSMFNSVQRSSDFTKVETVYWSRICQNTNNKNRKPVIVSSLDVDMKKISNCFYKSKSLEVFINSNGVMFSCIDPMGKYNSIGFLSIFYKLQKMCIPCCFLKDQSHTDTFSSCVYNKDVSNDIISPYILNFGKVVTKSKISFLPIIFDSFLNEGLRISFEQDNKRLKETTGYHVVKSCNGDIIRLRTTSDIIAFVNDKNTILIADDIIYFPMNYFSIGNNIYILVQEIVHEVVLVKKKINKDVISTFSPNSIILRELFPKQTKSVTIRSDSGMELTTDGFLIDGVKFNKDLSSKFMTFTKNVTTSDYISKYFSPLFKYVITESKERFIKTWVINIMLNFESDVNIESSVIISRLEEYYPNHGKKITN</sequence>
<comment type="function">
    <text evidence="1">Acts with RNA polymerase to initiate transcription from early gene promoters. Is recruited by the RPO-associated protein of 94 kDa (RAP94) to form the early transcription complex, which also contains the core RNA polymerase. ETF heterodimer binds to early gene promoters (By similarity).</text>
</comment>
<comment type="subunit">
    <text evidence="1">Heterodimer of a 70 kDa and a 82 kDa subunit. Part of the early transcription complex composed of ETF, RAP94, and the DNA-directed RNA polymerase (By similarity).</text>
</comment>
<comment type="similarity">
    <text evidence="2">Belongs to the poxviridae VETF large subunit family.</text>
</comment>
<reference key="1">
    <citation type="journal article" date="2003" name="J. Virol.">
        <title>Complete genomic sequence and comparative analysis of the tumorigenic poxvirus Yaba monkey tumor virus.</title>
        <authorList>
            <person name="Brunetti C.R."/>
            <person name="Amano H."/>
            <person name="Ueda Y."/>
            <person name="Qin J."/>
            <person name="Miyamura T."/>
            <person name="Suzuki T."/>
            <person name="Li X."/>
            <person name="Barrett J.W."/>
            <person name="McFadden G."/>
        </authorList>
    </citation>
    <scope>NUCLEOTIDE SEQUENCE [LARGE SCALE GENOMIC DNA]</scope>
</reference>
<organismHost>
    <name type="scientific">Erythrocebus patas</name>
    <name type="common">Red guenon</name>
    <name type="synonym">Cercopithecus patas</name>
    <dbReference type="NCBI Taxonomy" id="9538"/>
</organismHost>
<organismHost>
    <name type="scientific">Homo sapiens</name>
    <name type="common">Human</name>
    <dbReference type="NCBI Taxonomy" id="9606"/>
</organismHost>
<organismHost>
    <name type="scientific">Macaca</name>
    <name type="common">macaques</name>
    <dbReference type="NCBI Taxonomy" id="9539"/>
</organismHost>
<organismHost>
    <name type="scientific">Papio hamadryas</name>
    <name type="common">Hamadryas baboon</name>
    <dbReference type="NCBI Taxonomy" id="9557"/>
</organismHost>
<protein>
    <recommendedName>
        <fullName>Early transcription factor 82 kDa subunit</fullName>
    </recommendedName>
    <alternativeName>
        <fullName>ETF large subunit</fullName>
    </alternativeName>
</protein>